<reference key="1">
    <citation type="journal article" date="2007" name="Mol. Biol. Evol.">
        <title>Comparative genome analysis of the neurexin gene family in Danio rerio: insights into their functions and evolution.</title>
        <authorList>
            <person name="Rissone A."/>
            <person name="Monopoli M."/>
            <person name="Beltrame M."/>
            <person name="Bussolino F."/>
            <person name="Cotelli F."/>
            <person name="Arese M."/>
        </authorList>
    </citation>
    <scope>NUCLEOTIDE SEQUENCE [MRNA]</scope>
    <scope>DEVELOPMENTAL STAGE</scope>
    <scope>ALTERNATIVE SPLICING</scope>
</reference>
<dbReference type="EMBL" id="DQ641437">
    <property type="protein sequence ID" value="ABG25174.1"/>
    <property type="molecule type" value="mRNA"/>
</dbReference>
<dbReference type="SMR" id="A1XQY3"/>
<dbReference type="AGR" id="ZFIN:ZDB-GENE-070206-10"/>
<dbReference type="ZFIN" id="ZDB-GENE-070206-10">
    <property type="gene designation" value="nrxn3b"/>
</dbReference>
<dbReference type="ChiTaRS" id="nrxn3b">
    <property type="organism name" value="zebrafish"/>
</dbReference>
<dbReference type="Proteomes" id="UP000000437">
    <property type="component" value="Unplaced"/>
</dbReference>
<dbReference type="GO" id="GO:0016020">
    <property type="term" value="C:membrane"/>
    <property type="evidence" value="ECO:0007669"/>
    <property type="project" value="UniProtKB-SubCell"/>
</dbReference>
<dbReference type="GO" id="GO:0001525">
    <property type="term" value="P:angiogenesis"/>
    <property type="evidence" value="ECO:0000250"/>
    <property type="project" value="UniProtKB"/>
</dbReference>
<dbReference type="GO" id="GO:0007155">
    <property type="term" value="P:cell adhesion"/>
    <property type="evidence" value="ECO:0007669"/>
    <property type="project" value="UniProtKB-KW"/>
</dbReference>
<dbReference type="CDD" id="cd00110">
    <property type="entry name" value="LamG"/>
    <property type="match status" value="1"/>
</dbReference>
<dbReference type="FunFam" id="2.60.120.200:FF:000003">
    <property type="entry name" value="neurexin-1 isoform X1"/>
    <property type="match status" value="1"/>
</dbReference>
<dbReference type="Gene3D" id="2.60.120.200">
    <property type="match status" value="1"/>
</dbReference>
<dbReference type="InterPro" id="IPR013320">
    <property type="entry name" value="ConA-like_dom_sf"/>
</dbReference>
<dbReference type="InterPro" id="IPR001791">
    <property type="entry name" value="Laminin_G"/>
</dbReference>
<dbReference type="InterPro" id="IPR003585">
    <property type="entry name" value="Neurexin-like"/>
</dbReference>
<dbReference type="InterPro" id="IPR050372">
    <property type="entry name" value="Neurexin-related_CASP"/>
</dbReference>
<dbReference type="InterPro" id="IPR027789">
    <property type="entry name" value="Syndecan/Neurexin_dom"/>
</dbReference>
<dbReference type="PANTHER" id="PTHR15036:SF48">
    <property type="entry name" value="NEUREXIN-3B"/>
    <property type="match status" value="1"/>
</dbReference>
<dbReference type="PANTHER" id="PTHR15036">
    <property type="entry name" value="PIKACHURIN-LIKE PROTEIN"/>
    <property type="match status" value="1"/>
</dbReference>
<dbReference type="Pfam" id="PF02210">
    <property type="entry name" value="Laminin_G_2"/>
    <property type="match status" value="1"/>
</dbReference>
<dbReference type="Pfam" id="PF01034">
    <property type="entry name" value="Syndecan"/>
    <property type="match status" value="1"/>
</dbReference>
<dbReference type="SMART" id="SM00294">
    <property type="entry name" value="4.1m"/>
    <property type="match status" value="1"/>
</dbReference>
<dbReference type="SMART" id="SM00282">
    <property type="entry name" value="LamG"/>
    <property type="match status" value="1"/>
</dbReference>
<dbReference type="SUPFAM" id="SSF49899">
    <property type="entry name" value="Concanavalin A-like lectins/glucanases"/>
    <property type="match status" value="1"/>
</dbReference>
<dbReference type="PROSITE" id="PS50025">
    <property type="entry name" value="LAM_G_DOMAIN"/>
    <property type="match status" value="1"/>
</dbReference>
<accession>A1XQY3</accession>
<protein>
    <recommendedName>
        <fullName>Neurexin-3b-beta</fullName>
    </recommendedName>
    <alternativeName>
        <fullName>Neurexin IIIb-beta</fullName>
    </alternativeName>
    <component>
        <recommendedName>
            <fullName>Neurexin-3b-beta, soluble form</fullName>
        </recommendedName>
    </component>
    <component>
        <recommendedName>
            <fullName>Neurexin-3b-beta, C-terminal fragment</fullName>
            <shortName>NRXN3-CTF</shortName>
        </recommendedName>
    </component>
</protein>
<gene>
    <name type="primary">nrxn3b</name>
</gene>
<proteinExistence type="evidence at transcript level"/>
<comment type="function">
    <text>Neuronal cell surface protein that may be involved in cell recognition and cell adhesion.</text>
</comment>
<comment type="subcellular location">
    <subcellularLocation>
        <location evidence="6">Membrane</location>
        <topology evidence="6">Single-pass type I membrane protein</topology>
    </subcellularLocation>
</comment>
<comment type="alternative products">
    <event type="alternative promoter"/>
    <event type="alternative splicing"/>
    <isoform>
        <id>A1XQY3-1</id>
        <name>1b</name>
        <sequence type="displayed"/>
    </isoform>
    <isoform>
        <id>A1XQY1-1</id>
        <name>1a</name>
        <sequence type="external"/>
    </isoform>
    <isoform>
        <id>A1XQY1-2</id>
        <name>2a</name>
        <name>Soluble form</name>
        <sequence type="external"/>
    </isoform>
    <text>A number of isoforms, alpha-type and beta-type are produced by alternative promoter usage. Beta-type isoforms differ from alpha-type isoforms in their N-terminus.</text>
</comment>
<comment type="developmental stage">
    <text evidence="5">After the very early developmental stages, the expression levels decrease and remain relatively constant until around 24 h, with the onset of an increase of expression that continues till the larval stages.</text>
</comment>
<comment type="PTM">
    <text evidence="1">Processed by alpha-secretase leading to the formation of an extracellular soluble protein as well as a C-terminal membrane-embedded fragment (CTF). Proteolysis of these CTFs by gamma-secretase releases intracellular domains (ICDs) and extracellular peptides (By similarity).</text>
</comment>
<comment type="similarity">
    <text evidence="6">Belongs to the neurexin family.</text>
</comment>
<organism>
    <name type="scientific">Danio rerio</name>
    <name type="common">Zebrafish</name>
    <name type="synonym">Brachydanio rerio</name>
    <dbReference type="NCBI Taxonomy" id="7955"/>
    <lineage>
        <taxon>Eukaryota</taxon>
        <taxon>Metazoa</taxon>
        <taxon>Chordata</taxon>
        <taxon>Craniata</taxon>
        <taxon>Vertebrata</taxon>
        <taxon>Euteleostomi</taxon>
        <taxon>Actinopterygii</taxon>
        <taxon>Neopterygii</taxon>
        <taxon>Teleostei</taxon>
        <taxon>Ostariophysi</taxon>
        <taxon>Cypriniformes</taxon>
        <taxon>Danionidae</taxon>
        <taxon>Danioninae</taxon>
        <taxon>Danio</taxon>
    </lineage>
</organism>
<name>NR3BB_DANRE</name>
<keyword id="KW-0877">Alternative promoter usage</keyword>
<keyword id="KW-0025">Alternative splicing</keyword>
<keyword id="KW-0037">Angiogenesis</keyword>
<keyword id="KW-0130">Cell adhesion</keyword>
<keyword id="KW-0472">Membrane</keyword>
<keyword id="KW-1185">Reference proteome</keyword>
<keyword id="KW-0732">Signal</keyword>
<keyword id="KW-0812">Transmembrane</keyword>
<keyword id="KW-1133">Transmembrane helix</keyword>
<feature type="signal peptide" evidence="2">
    <location>
        <begin position="1"/>
        <end position="30"/>
    </location>
</feature>
<feature type="chain" id="PRO_0000412554" description="Neurexin-3b-beta">
    <location>
        <begin position="31"/>
        <end position="675"/>
    </location>
</feature>
<feature type="chain" id="PRO_0000412555" description="Neurexin-3b-beta, soluble form" evidence="1">
    <location>
        <begin position="31"/>
        <end position="536"/>
    </location>
</feature>
<feature type="chain" id="PRO_0000412556" description="Neurexin-3b-beta, C-terminal fragment" evidence="1">
    <location>
        <begin position="537"/>
        <end position="665"/>
    </location>
</feature>
<feature type="topological domain" description="Extracellular" evidence="2">
    <location>
        <begin position="31"/>
        <end position="599"/>
    </location>
</feature>
<feature type="transmembrane region" description="Helical" evidence="2">
    <location>
        <begin position="600"/>
        <end position="620"/>
    </location>
</feature>
<feature type="topological domain" description="Cytoplasmic" evidence="2">
    <location>
        <begin position="621"/>
        <end position="675"/>
    </location>
</feature>
<feature type="domain" description="Laminin G-like" evidence="3">
    <location>
        <begin position="81"/>
        <end position="281"/>
    </location>
</feature>
<feature type="region of interest" description="Disordered" evidence="4">
    <location>
        <begin position="313"/>
        <end position="337"/>
    </location>
</feature>
<feature type="region of interest" description="Disordered" evidence="4">
    <location>
        <begin position="490"/>
        <end position="534"/>
    </location>
</feature>
<feature type="region of interest" description="Disordered" evidence="4">
    <location>
        <begin position="642"/>
        <end position="675"/>
    </location>
</feature>
<feature type="compositionally biased region" description="Polar residues" evidence="4">
    <location>
        <begin position="325"/>
        <end position="335"/>
    </location>
</feature>
<feature type="compositionally biased region" description="Basic and acidic residues" evidence="4">
    <location>
        <begin position="665"/>
        <end position="675"/>
    </location>
</feature>
<evidence type="ECO:0000250" key="1"/>
<evidence type="ECO:0000255" key="2"/>
<evidence type="ECO:0000255" key="3">
    <source>
        <dbReference type="PROSITE-ProRule" id="PRU00122"/>
    </source>
</evidence>
<evidence type="ECO:0000256" key="4">
    <source>
        <dbReference type="SAM" id="MobiDB-lite"/>
    </source>
</evidence>
<evidence type="ECO:0000269" key="5">
    <source>
    </source>
</evidence>
<evidence type="ECO:0000305" key="6"/>
<sequence length="675" mass="73888">MRPHFKTRYPQWLSCMLPLVTGCVFGAVWGSNLDSTVVLSSSTFSHSETQHHHHLAGAQHHPPSIAIYRSPASLRGGHAGATYIFGKGGGLIMYTWPNNERPSTRTDRLAVGFSTTIKDGILVRIDSAPRLGDYIMLHIEEGKVCVTFNIGTVDISVKEMTTEVNDGKYHVVRFTRNGGNATLQVDNWPINEHFPSGNSDIERFQMANKKIPFKYTRPVEDWLHEKGRQLTIFNTQATISIGGNDRKRPYQGQLSGLYYNGLKVLNMAAEGHANIKINGSVRLVGDVPTSRSPSRTTTSMPPEMSTTFIETTTTLSTTTTRKQRSPPTIQTTDDIVSSAECSSDDEDLEECDGGHTGGELVIPVLVEDPIDIPPISTRVPFIPLPPTLHPVLTIIETTKESLSIATEAGVPCFSDQGRDDCDDDDGDDDDGDGLVISGFGSGEVFDSSLPPTDDEDFYTTFSLVTDKILTTSTYEGGYKALAPKWEEKDFKPKKPSEVGRITAIPPLPDLRSSAASPVRPEPAPKIPAGKMNNREVKPQPDIVLLPLPTSFDMDGTKPKGPYITQPMLRTIPSALPTVPGIRRVPPGASEVIRESSSTTGMVVGIVSAAALCILILLYAMYKYRNRDEGSYQVDETRNYISNSAQNNGTVVKDKQPSTKGASNKRPKDKDKEYYV</sequence>